<evidence type="ECO:0000255" key="1">
    <source>
        <dbReference type="HAMAP-Rule" id="MF_04070"/>
    </source>
</evidence>
<evidence type="ECO:0000256" key="2">
    <source>
        <dbReference type="SAM" id="MobiDB-lite"/>
    </source>
</evidence>
<protein>
    <recommendedName>
        <fullName evidence="1">Nucleoprotein</fullName>
    </recommendedName>
    <alternativeName>
        <fullName evidence="1">Nucleocapsid protein</fullName>
        <shortName evidence="1">Protein N</shortName>
    </alternativeName>
</protein>
<feature type="chain" id="PRO_0000079118" description="Nucleoprotein">
    <location>
        <begin position="1"/>
        <end position="498"/>
    </location>
</feature>
<feature type="region of interest" description="Disordered" evidence="2">
    <location>
        <begin position="1"/>
        <end position="21"/>
    </location>
</feature>
<feature type="short sequence motif" description="Unconventional nuclear localization signal" evidence="1">
    <location>
        <begin position="1"/>
        <end position="18"/>
    </location>
</feature>
<feature type="short sequence motif" description="Bipartite nuclear localization signal" evidence="1">
    <location>
        <begin position="198"/>
        <end position="216"/>
    </location>
</feature>
<feature type="compositionally biased region" description="Basic and acidic residues" evidence="2">
    <location>
        <begin position="8"/>
        <end position="21"/>
    </location>
</feature>
<dbReference type="EMBL" id="M63770">
    <property type="protein sequence ID" value="AAA52269.1"/>
    <property type="molecule type" value="Genomic_RNA"/>
</dbReference>
<dbReference type="SMR" id="P26090"/>
<dbReference type="GO" id="GO:0019029">
    <property type="term" value="C:helical viral capsid"/>
    <property type="evidence" value="ECO:0007669"/>
    <property type="project" value="UniProtKB-UniRule"/>
</dbReference>
<dbReference type="GO" id="GO:0043657">
    <property type="term" value="C:host cell"/>
    <property type="evidence" value="ECO:0007669"/>
    <property type="project" value="GOC"/>
</dbReference>
<dbReference type="GO" id="GO:0042025">
    <property type="term" value="C:host cell nucleus"/>
    <property type="evidence" value="ECO:0007669"/>
    <property type="project" value="UniProtKB-SubCell"/>
</dbReference>
<dbReference type="GO" id="GO:1990904">
    <property type="term" value="C:ribonucleoprotein complex"/>
    <property type="evidence" value="ECO:0007669"/>
    <property type="project" value="UniProtKB-KW"/>
</dbReference>
<dbReference type="GO" id="GO:0019013">
    <property type="term" value="C:viral nucleocapsid"/>
    <property type="evidence" value="ECO:0007669"/>
    <property type="project" value="UniProtKB-UniRule"/>
</dbReference>
<dbReference type="GO" id="GO:0003723">
    <property type="term" value="F:RNA binding"/>
    <property type="evidence" value="ECO:0007669"/>
    <property type="project" value="UniProtKB-UniRule"/>
</dbReference>
<dbReference type="GO" id="GO:0005198">
    <property type="term" value="F:structural molecule activity"/>
    <property type="evidence" value="ECO:0007669"/>
    <property type="project" value="UniProtKB-UniRule"/>
</dbReference>
<dbReference type="GO" id="GO:0046718">
    <property type="term" value="P:symbiont entry into host cell"/>
    <property type="evidence" value="ECO:0007669"/>
    <property type="project" value="UniProtKB-KW"/>
</dbReference>
<dbReference type="GO" id="GO:0075732">
    <property type="term" value="P:viral penetration into host nucleus"/>
    <property type="evidence" value="ECO:0007669"/>
    <property type="project" value="UniProtKB-UniRule"/>
</dbReference>
<dbReference type="HAMAP" id="MF_04070">
    <property type="entry name" value="INFV_NCAP"/>
    <property type="match status" value="1"/>
</dbReference>
<dbReference type="InterPro" id="IPR002141">
    <property type="entry name" value="Flu_NP"/>
</dbReference>
<dbReference type="Pfam" id="PF00506">
    <property type="entry name" value="Flu_NP"/>
    <property type="match status" value="1"/>
</dbReference>
<dbReference type="SUPFAM" id="SSF161003">
    <property type="entry name" value="flu NP-like"/>
    <property type="match status" value="1"/>
</dbReference>
<comment type="function">
    <text evidence="1">Encapsidates the negative strand viral RNA, protecting it from nucleases. The encapsidated genomic RNA is termed the ribonucleoprotein (RNP) and serves as template for transcription and replication. The RNP needs to be localized in the host nucleus to start an infectious cycle, but is too large to diffuse through the nuclear pore complex. NP comprises at least 2 nuclear localization signals that are responsible for the active RNP import into the nucleus through cellular importin alpha/beta pathway. Later in the infection, nclear export of RNPs are mediated through viral proteins NEP interacting with M1 which binds nucleoproteins. It is possible that nucleoprotein binds directly host exportin-1/XPO1 and plays an active role in RNPs nuclear export. M1 interaction with RNP seems to hide nucleoprotein's nuclear localization signals. Soon after a virion infects a new cell, M1 dissociates from the RNP under acidification of the virion driven by M2 protein. Dissociation of M1 from RNP unmasks nucleoprotein's nuclear localization signals, targeting the RNP to the nucleus.</text>
</comment>
<comment type="subunit">
    <text evidence="1">Homomultimerizes to form the nucleocapsid. May bind host exportin-1/XPO1. Binds to viral genomic RNA. Protein-RNA contacts are mediated by a combination of electrostatic interactions between positively charged residues and the phosphate backbone and planar interactions between aromatic side chains and bases.</text>
</comment>
<comment type="subcellular location">
    <subcellularLocation>
        <location evidence="1">Virion</location>
    </subcellularLocation>
    <subcellularLocation>
        <location evidence="1">Host nucleus</location>
    </subcellularLocation>
</comment>
<comment type="PTM">
    <text evidence="1">Late in virus-infected cells, may be cleaved from a 56-kDa protein to a 53-kDa protein by a cellular caspase. This cleavage might be a marker for the onset of apoptosis in infected cells or have a specific function in virus host interaction.</text>
</comment>
<comment type="similarity">
    <text evidence="1">Belongs to the influenza viruses nucleoprotein family.</text>
</comment>
<accession>P26090</accession>
<name>NCAP_I83A0</name>
<keyword id="KW-0167">Capsid protein</keyword>
<keyword id="KW-1139">Helical capsid protein</keyword>
<keyword id="KW-1048">Host nucleus</keyword>
<keyword id="KW-0945">Host-virus interaction</keyword>
<keyword id="KW-0687">Ribonucleoprotein</keyword>
<keyword id="KW-0694">RNA-binding</keyword>
<keyword id="KW-0543">Viral nucleoprotein</keyword>
<keyword id="KW-1163">Viral penetration into host nucleus</keyword>
<keyword id="KW-0946">Virion</keyword>
<keyword id="KW-1160">Virus entry into host cell</keyword>
<reference key="1">
    <citation type="journal article" date="1991" name="J. Virol.">
        <title>Evolution of influenza A virus nucleoprotein genes: implications for the origins of H1N1 human and classical swine viruses.</title>
        <authorList>
            <person name="Gorman O.T."/>
            <person name="Bean W.J."/>
            <person name="Kawaoka Y."/>
            <person name="Donatelli I."/>
            <person name="Guo Y."/>
            <person name="Webster R.G."/>
        </authorList>
    </citation>
    <scope>NUCLEOTIDE SEQUENCE [GENOMIC RNA]</scope>
</reference>
<gene>
    <name evidence="1" type="primary">NP</name>
</gene>
<organismHost>
    <name type="scientific">Aves</name>
    <dbReference type="NCBI Taxonomy" id="8782"/>
</organismHost>
<organismHost>
    <name type="scientific">Cetacea</name>
    <name type="common">whales</name>
    <dbReference type="NCBI Taxonomy" id="9721"/>
</organismHost>
<organismHost>
    <name type="scientific">Homo sapiens</name>
    <name type="common">Human</name>
    <dbReference type="NCBI Taxonomy" id="9606"/>
</organismHost>
<organismHost>
    <name type="scientific">Phocidae</name>
    <name type="common">true seals</name>
    <dbReference type="NCBI Taxonomy" id="9709"/>
</organismHost>
<organismHost>
    <name type="scientific">Sus scrofa</name>
    <name type="common">Pig</name>
    <dbReference type="NCBI Taxonomy" id="9823"/>
</organismHost>
<proteinExistence type="inferred from homology"/>
<sequence length="498" mass="56221">MASQGTKRSYEQMETDGERQNATEIRASVGKMIDGIGRFYIQMCTELKLSDYEGRLIQNSLTIERMVLSAFDERRNRYLEEHPSAGKDPKKTGGPIYRRVGGKWIRELILYDKEEIRRIWRQANNGDDATRGLTHMMIWHSNLNDATYQRTRALVRTGMDPRMCSLMQGSTLPRRSGAAGAAVKGVGTMVMELIRMIKRGINDRNFWRGENGRKTRSAYERMCNILKGKFQTAAQRAMMDQVRESRNPGNAEIEDLIFSARSALILRGSVAHKSCLPACVYGPAVSSGYDFEKEGYSLVGIDPFKLLQNSQVYSLIRPNENPAHKSQLVWMACHSAAFEDLRLLSFIRGTKVSPRGKLSTRGVQIASNENMDTMESSTLELRSRYWAIRTRSGGNTNQQRASAGQISVQPTFSVQRNLPFDKSTVMAAFTGNTEGRTSDMRAEIIRMMENAKPEEVSFRGRGVFELSDEKATNPIVPSFDMSNEGSYFFGDNAEEYDN</sequence>
<organism>
    <name type="scientific">Influenza A virus (strain A/Swine/Dandong/9/1983 H3N2)</name>
    <dbReference type="NCBI Taxonomy" id="382846"/>
    <lineage>
        <taxon>Viruses</taxon>
        <taxon>Riboviria</taxon>
        <taxon>Orthornavirae</taxon>
        <taxon>Negarnaviricota</taxon>
        <taxon>Polyploviricotina</taxon>
        <taxon>Insthoviricetes</taxon>
        <taxon>Articulavirales</taxon>
        <taxon>Orthomyxoviridae</taxon>
        <taxon>Alphainfluenzavirus</taxon>
        <taxon>Alphainfluenzavirus influenzae</taxon>
        <taxon>Influenza A virus</taxon>
    </lineage>
</organism>